<protein>
    <recommendedName>
        <fullName>Uncharacterized protein MT1399</fullName>
    </recommendedName>
</protein>
<dbReference type="EMBL" id="AE000516">
    <property type="protein sequence ID" value="AAK45662.1"/>
    <property type="molecule type" value="Genomic_DNA"/>
</dbReference>
<dbReference type="PIR" id="C70741">
    <property type="entry name" value="C70741"/>
</dbReference>
<dbReference type="KEGG" id="mtc:MT1399"/>
<dbReference type="PATRIC" id="fig|83331.31.peg.1506"/>
<dbReference type="HOGENOM" id="CLU_096782_0_0_11"/>
<dbReference type="Proteomes" id="UP000001020">
    <property type="component" value="Chromosome"/>
</dbReference>
<organism>
    <name type="scientific">Mycobacterium tuberculosis (strain CDC 1551 / Oshkosh)</name>
    <dbReference type="NCBI Taxonomy" id="83331"/>
    <lineage>
        <taxon>Bacteria</taxon>
        <taxon>Bacillati</taxon>
        <taxon>Actinomycetota</taxon>
        <taxon>Actinomycetes</taxon>
        <taxon>Mycobacteriales</taxon>
        <taxon>Mycobacteriaceae</taxon>
        <taxon>Mycobacterium</taxon>
        <taxon>Mycobacterium tuberculosis complex</taxon>
    </lineage>
</organism>
<gene>
    <name type="ordered locus">MT1399</name>
</gene>
<name>Y1356_MYCTO</name>
<sequence length="263" mass="28481">MLIAGYLTDWRIMTTAQLRPIAPQKLHFSENLSVWVSDAQCRLVVSQPALDPTLWNTYLQGALRAYSKHGVECTLDLDAISDGSDTQLFFAAIDIGGDVVGGARVIGPLRSADDSHAVVEWAGNPGLSAVRKMINDRAPFGVVEVKSGWVNSDAQRSDAIAAALARALPLSMSLLGVQFVMGTAAAHALDRWRSSGGVIAARIPAAAYPDERYRTKMIWWDRRTLANHAEPKQLSRMLVESRKLLRDVEALSATTAATAGAEQ</sequence>
<proteinExistence type="predicted"/>
<keyword id="KW-1185">Reference proteome</keyword>
<accession>P9WM08</accession>
<accession>L0T956</accession>
<accession>P64827</accession>
<accession>Q11026</accession>
<reference key="1">
    <citation type="journal article" date="2002" name="J. Bacteriol.">
        <title>Whole-genome comparison of Mycobacterium tuberculosis clinical and laboratory strains.</title>
        <authorList>
            <person name="Fleischmann R.D."/>
            <person name="Alland D."/>
            <person name="Eisen J.A."/>
            <person name="Carpenter L."/>
            <person name="White O."/>
            <person name="Peterson J.D."/>
            <person name="DeBoy R.T."/>
            <person name="Dodson R.J."/>
            <person name="Gwinn M.L."/>
            <person name="Haft D.H."/>
            <person name="Hickey E.K."/>
            <person name="Kolonay J.F."/>
            <person name="Nelson W.C."/>
            <person name="Umayam L.A."/>
            <person name="Ermolaeva M.D."/>
            <person name="Salzberg S.L."/>
            <person name="Delcher A."/>
            <person name="Utterback T.R."/>
            <person name="Weidman J.F."/>
            <person name="Khouri H.M."/>
            <person name="Gill J."/>
            <person name="Mikula A."/>
            <person name="Bishai W."/>
            <person name="Jacobs W.R. Jr."/>
            <person name="Venter J.C."/>
            <person name="Fraser C.M."/>
        </authorList>
    </citation>
    <scope>NUCLEOTIDE SEQUENCE [LARGE SCALE GENOMIC DNA]</scope>
    <source>
        <strain>CDC 1551 / Oshkosh</strain>
    </source>
</reference>
<feature type="chain" id="PRO_0000427386" description="Uncharacterized protein MT1399">
    <location>
        <begin position="1"/>
        <end position="263"/>
    </location>
</feature>